<evidence type="ECO:0000255" key="1"/>
<evidence type="ECO:0000255" key="2">
    <source>
        <dbReference type="PROSITE-ProRule" id="PRU00040"/>
    </source>
</evidence>
<evidence type="ECO:0000269" key="3">
    <source>
    </source>
</evidence>
<evidence type="ECO:0000305" key="4"/>
<evidence type="ECO:0007829" key="5">
    <source>
        <dbReference type="PDB" id="4JO8"/>
    </source>
</evidence>
<feature type="chain" id="PRO_0000046686" description="Killer cell lectin-like receptor 8">
    <location>
        <begin position="1"/>
        <end position="266"/>
    </location>
</feature>
<feature type="topological domain" description="Cytoplasmic" evidence="1">
    <location>
        <begin position="1"/>
        <end position="44"/>
    </location>
</feature>
<feature type="transmembrane region" description="Helical; Signal-anchor for type II membrane protein" evidence="1">
    <location>
        <begin position="45"/>
        <end position="66"/>
    </location>
</feature>
<feature type="topological domain" description="Extracellular" evidence="1">
    <location>
        <begin position="67"/>
        <end position="266"/>
    </location>
</feature>
<feature type="domain" description="C-type lectin" evidence="2">
    <location>
        <begin position="143"/>
        <end position="261"/>
    </location>
</feature>
<feature type="glycosylation site" description="N-linked (GlcNAc...) asparagine" evidence="1">
    <location>
        <position position="87"/>
    </location>
</feature>
<feature type="glycosylation site" description="N-linked (GlcNAc...) asparagine" evidence="1">
    <location>
        <position position="104"/>
    </location>
</feature>
<feature type="disulfide bond" evidence="2">
    <location>
        <begin position="149"/>
        <end position="154"/>
    </location>
</feature>
<feature type="disulfide bond" evidence="2">
    <location>
        <begin position="167"/>
        <end position="255"/>
    </location>
</feature>
<feature type="disulfide bond" evidence="2">
    <location>
        <begin position="171"/>
        <end position="257"/>
    </location>
</feature>
<feature type="disulfide bond" evidence="2">
    <location>
        <begin position="236"/>
        <end position="249"/>
    </location>
</feature>
<feature type="splice variant" id="VSP_003071" description="In isoform H2." evidence="4">
    <location>
        <begin position="39"/>
        <end position="41"/>
    </location>
</feature>
<feature type="helix" evidence="5">
    <location>
        <begin position="113"/>
        <end position="131"/>
    </location>
</feature>
<gene>
    <name type="primary">Klra8</name>
    <name type="synonym">Ly-49h</name>
    <name type="synonym">Ly49-h</name>
    <name type="synonym">Ly49H</name>
</gene>
<keyword id="KW-0002">3D-structure</keyword>
<keyword id="KW-0025">Alternative splicing</keyword>
<keyword id="KW-0130">Cell adhesion</keyword>
<keyword id="KW-1003">Cell membrane</keyword>
<keyword id="KW-1015">Disulfide bond</keyword>
<keyword id="KW-0325">Glycoprotein</keyword>
<keyword id="KW-0430">Lectin</keyword>
<keyword id="KW-0472">Membrane</keyword>
<keyword id="KW-0675">Receptor</keyword>
<keyword id="KW-1185">Reference proteome</keyword>
<keyword id="KW-0735">Signal-anchor</keyword>
<keyword id="KW-0812">Transmembrane</keyword>
<keyword id="KW-1133">Transmembrane helix</keyword>
<name>KLRA8_MOUSE</name>
<comment type="function">
    <text evidence="3">Receptor on natural killer (NK) cells for class I MHC.</text>
</comment>
<comment type="subunit">
    <text evidence="3">Homodimer; disulfide-linked. Interacts with the adapter protein TYROBP/DAP12; the interaction leads to natural killer cell activation (PubMed:9647200).</text>
</comment>
<comment type="subcellular location">
    <subcellularLocation>
        <location evidence="4">Cell membrane</location>
        <topology evidence="1">Single-pass type II membrane protein</topology>
    </subcellularLocation>
</comment>
<comment type="alternative products">
    <event type="alternative splicing"/>
    <isoform>
        <id>Q60682-1</id>
        <name>H1</name>
        <sequence type="displayed"/>
    </isoform>
    <isoform>
        <id>Q60682-2</id>
        <name>H2</name>
        <sequence type="described" ref="VSP_003071"/>
    </isoform>
</comment>
<reference key="1">
    <citation type="journal article" date="1994" name="J. Exp. Med.">
        <title>Expression of different members of the Ly-49 gene family defines distinct natural killer cell subsets and cell adhesion properties.</title>
        <authorList>
            <person name="Brennan J."/>
            <person name="Mager D."/>
            <person name="Jefferies W."/>
            <person name="Takei F."/>
        </authorList>
    </citation>
    <scope>NUCLEOTIDE SEQUENCE [MRNA] (ISOFORM H1)</scope>
    <source>
        <strain>C57BL/6 X CBA</strain>
        <tissue>Lung</tissue>
    </source>
</reference>
<reference key="2">
    <citation type="journal article" date="1996" name="Immunogenetics">
        <title>Alternatively spliced Ly-49D and H transcripts are found in IL-2-activated NK cells.</title>
        <authorList>
            <person name="Silver E.T."/>
            <person name="Elliott J.F."/>
            <person name="Kane K.P."/>
        </authorList>
    </citation>
    <scope>NUCLEOTIDE SEQUENCE [MRNA]</scope>
    <scope>ALTERNATIVE SPLICING</scope>
    <source>
        <strain>C57BL/6J</strain>
    </source>
</reference>
<reference key="3">
    <citation type="journal article" date="1998" name="J. Immunol.">
        <title>Ly-49D and Ly-49H associate with mouse DAP12 and form activating receptors.</title>
        <authorList>
            <person name="Smith K.M."/>
            <person name="Wu J."/>
            <person name="Bakker A.B."/>
            <person name="Phillips J.H."/>
            <person name="Lanier L.L."/>
        </authorList>
    </citation>
    <scope>FUNCTION</scope>
    <scope>INTERACTION WITH TYROBP</scope>
</reference>
<dbReference type="EMBL" id="U12889">
    <property type="protein sequence ID" value="AAA58704.1"/>
    <property type="molecule type" value="mRNA"/>
</dbReference>
<dbReference type="EMBL" id="L78253">
    <property type="protein sequence ID" value="AAC32668.1"/>
    <property type="molecule type" value="mRNA"/>
</dbReference>
<dbReference type="CCDS" id="CCDS51927.1">
    <molecule id="Q60682-1"/>
</dbReference>
<dbReference type="PIR" id="I49114">
    <property type="entry name" value="I49114"/>
</dbReference>
<dbReference type="RefSeq" id="NP_001095090.1">
    <molecule id="Q60682-1"/>
    <property type="nucleotide sequence ID" value="NM_001101620.1"/>
</dbReference>
<dbReference type="RefSeq" id="NP_034780.1">
    <molecule id="Q60682-2"/>
    <property type="nucleotide sequence ID" value="NM_010650.3"/>
</dbReference>
<dbReference type="PDB" id="4JO8">
    <property type="method" value="X-ray"/>
    <property type="resolution" value="3.20 A"/>
    <property type="chains" value="B=110-266"/>
</dbReference>
<dbReference type="PDBsum" id="4JO8"/>
<dbReference type="SMR" id="Q60682"/>
<dbReference type="BioGRID" id="201000">
    <property type="interactions" value="1"/>
</dbReference>
<dbReference type="FunCoup" id="Q60682">
    <property type="interactions" value="162"/>
</dbReference>
<dbReference type="STRING" id="10090.ENSMUSP00000014476"/>
<dbReference type="GlyCosmos" id="Q60682">
    <property type="glycosylation" value="2 sites, No reported glycans"/>
</dbReference>
<dbReference type="GlyGen" id="Q60682">
    <property type="glycosylation" value="2 sites"/>
</dbReference>
<dbReference type="PaxDb" id="10090-ENSMUSP00000014476"/>
<dbReference type="DNASU" id="16639"/>
<dbReference type="Ensembl" id="ENSMUST00000014476.6">
    <molecule id="Q60682-1"/>
    <property type="protein sequence ID" value="ENSMUSP00000014476.6"/>
    <property type="gene ID" value="ENSMUSG00000089727.3"/>
</dbReference>
<dbReference type="GeneID" id="16639"/>
<dbReference type="KEGG" id="mmu:16639"/>
<dbReference type="UCSC" id="uc009ehp.3">
    <molecule id="Q60682-1"/>
    <property type="organism name" value="mouse"/>
</dbReference>
<dbReference type="AGR" id="MGI:102968"/>
<dbReference type="CTD" id="16639"/>
<dbReference type="MGI" id="MGI:102968">
    <property type="gene designation" value="Klra8"/>
</dbReference>
<dbReference type="VEuPathDB" id="HostDB:ENSMUSG00000089727"/>
<dbReference type="eggNOG" id="KOG4297">
    <property type="taxonomic scope" value="Eukaryota"/>
</dbReference>
<dbReference type="GeneTree" id="ENSGT00390000008117"/>
<dbReference type="HOGENOM" id="CLU_049894_1_0_1"/>
<dbReference type="InParanoid" id="Q60682"/>
<dbReference type="OMA" id="IMFELVI"/>
<dbReference type="OrthoDB" id="2142683at2759"/>
<dbReference type="PhylomeDB" id="Q60682"/>
<dbReference type="TreeFam" id="TF336674"/>
<dbReference type="BioGRID-ORCS" id="16639">
    <property type="hits" value="0 hits in 76 CRISPR screens"/>
</dbReference>
<dbReference type="ChiTaRS" id="Klra8">
    <property type="organism name" value="mouse"/>
</dbReference>
<dbReference type="PRO" id="PR:Q60682"/>
<dbReference type="Proteomes" id="UP000000589">
    <property type="component" value="Chromosome 6"/>
</dbReference>
<dbReference type="RNAct" id="Q60682">
    <property type="molecule type" value="protein"/>
</dbReference>
<dbReference type="Bgee" id="ENSMUSG00000089727">
    <property type="expression patterns" value="Expressed in granulocyte and 27 other cell types or tissues"/>
</dbReference>
<dbReference type="GO" id="GO:0009986">
    <property type="term" value="C:cell surface"/>
    <property type="evidence" value="ECO:0000314"/>
    <property type="project" value="UniProtKB"/>
</dbReference>
<dbReference type="GO" id="GO:0005886">
    <property type="term" value="C:plasma membrane"/>
    <property type="evidence" value="ECO:0000304"/>
    <property type="project" value="MGI"/>
</dbReference>
<dbReference type="GO" id="GO:0030246">
    <property type="term" value="F:carbohydrate binding"/>
    <property type="evidence" value="ECO:0007669"/>
    <property type="project" value="UniProtKB-KW"/>
</dbReference>
<dbReference type="GO" id="GO:0007155">
    <property type="term" value="P:cell adhesion"/>
    <property type="evidence" value="ECO:0007669"/>
    <property type="project" value="UniProtKB-KW"/>
</dbReference>
<dbReference type="GO" id="GO:0009615">
    <property type="term" value="P:response to virus"/>
    <property type="evidence" value="ECO:0000314"/>
    <property type="project" value="MGI"/>
</dbReference>
<dbReference type="CDD" id="cd03593">
    <property type="entry name" value="CLECT_NK_receptors_like"/>
    <property type="match status" value="1"/>
</dbReference>
<dbReference type="FunFam" id="3.10.100.10:FF:000053">
    <property type="entry name" value="Killer cell lectin-like receptor 3"/>
    <property type="match status" value="1"/>
</dbReference>
<dbReference type="Gene3D" id="3.10.100.10">
    <property type="entry name" value="Mannose-Binding Protein A, subunit A"/>
    <property type="match status" value="1"/>
</dbReference>
<dbReference type="InterPro" id="IPR001304">
    <property type="entry name" value="C-type_lectin-like"/>
</dbReference>
<dbReference type="InterPro" id="IPR016186">
    <property type="entry name" value="C-type_lectin-like/link_sf"/>
</dbReference>
<dbReference type="InterPro" id="IPR016187">
    <property type="entry name" value="CTDL_fold"/>
</dbReference>
<dbReference type="InterPro" id="IPR013600">
    <property type="entry name" value="Ly49_N"/>
</dbReference>
<dbReference type="InterPro" id="IPR052013">
    <property type="entry name" value="Mouse_KLRs"/>
</dbReference>
<dbReference type="InterPro" id="IPR033992">
    <property type="entry name" value="NKR-like_CTLD"/>
</dbReference>
<dbReference type="PANTHER" id="PTHR46329">
    <property type="entry name" value="KILLER CELL LECTIN-LIKE RECEPTOR 2"/>
    <property type="match status" value="1"/>
</dbReference>
<dbReference type="PANTHER" id="PTHR46329:SF3">
    <property type="entry name" value="KILLER CELL LECTIN-LIKE RECEPTOR 3-RELATED"/>
    <property type="match status" value="1"/>
</dbReference>
<dbReference type="Pfam" id="PF00059">
    <property type="entry name" value="Lectin_C"/>
    <property type="match status" value="1"/>
</dbReference>
<dbReference type="Pfam" id="PF08391">
    <property type="entry name" value="Ly49"/>
    <property type="match status" value="1"/>
</dbReference>
<dbReference type="SMART" id="SM00034">
    <property type="entry name" value="CLECT"/>
    <property type="match status" value="1"/>
</dbReference>
<dbReference type="SUPFAM" id="SSF56436">
    <property type="entry name" value="C-type lectin-like"/>
    <property type="match status" value="1"/>
</dbReference>
<dbReference type="PROSITE" id="PS50041">
    <property type="entry name" value="C_TYPE_LECTIN_2"/>
    <property type="match status" value="1"/>
</dbReference>
<protein>
    <recommendedName>
        <fullName>Killer cell lectin-like receptor 8</fullName>
    </recommendedName>
    <alternativeName>
        <fullName>Lymphocyte antigen 49h</fullName>
        <shortName>Ly-49h</shortName>
    </alternativeName>
    <alternativeName>
        <fullName>T-cell surface glycoprotein Ly-49H</fullName>
    </alternativeName>
</protein>
<organism>
    <name type="scientific">Mus musculus</name>
    <name type="common">Mouse</name>
    <dbReference type="NCBI Taxonomy" id="10090"/>
    <lineage>
        <taxon>Eukaryota</taxon>
        <taxon>Metazoa</taxon>
        <taxon>Chordata</taxon>
        <taxon>Craniata</taxon>
        <taxon>Vertebrata</taxon>
        <taxon>Euteleostomi</taxon>
        <taxon>Mammalia</taxon>
        <taxon>Eutheria</taxon>
        <taxon>Euarchontoglires</taxon>
        <taxon>Glires</taxon>
        <taxon>Rodentia</taxon>
        <taxon>Myomorpha</taxon>
        <taxon>Muroidea</taxon>
        <taxon>Muridae</taxon>
        <taxon>Murinae</taxon>
        <taxon>Mus</taxon>
        <taxon>Mus</taxon>
    </lineage>
</organism>
<accession>Q60682</accession>
<accession>O78027</accession>
<sequence length="266" mass="31393">MSEQEVTFPTMRFHKSSGLNSQVRLEGTQRSRKAGLRVCSVPWQLIVIALGILCSLRLVIVAVFVTKFFQYSQHKQEINETLNHRHNCSNMQRDFNLKEEMLTNKSIDCRPSYELLEYIKREQERWDSETKSVSDSSRDTGRGVKYWFCYGTKCYYFIMNKTTWSGCKANCQHYSVPIVKIEDEDELKFLQRHVILESYWIGLSYDKKKKEWAWIHNGQSKLDMKIKKMNFTSRGCVFLSKARIEDTDCNTPYYCICGKKLDKFPD</sequence>
<proteinExistence type="evidence at protein level"/>